<evidence type="ECO:0000255" key="1"/>
<evidence type="ECO:0000305" key="2"/>
<proteinExistence type="evidence at protein level"/>
<name>Y2287_MYCTU</name>
<gene>
    <name type="ordered locus">Rv2287</name>
    <name type="ORF">MTCY339.23c</name>
</gene>
<reference key="1">
    <citation type="journal article" date="1998" name="Nature">
        <title>Deciphering the biology of Mycobacterium tuberculosis from the complete genome sequence.</title>
        <authorList>
            <person name="Cole S.T."/>
            <person name="Brosch R."/>
            <person name="Parkhill J."/>
            <person name="Garnier T."/>
            <person name="Churcher C.M."/>
            <person name="Harris D.E."/>
            <person name="Gordon S.V."/>
            <person name="Eiglmeier K."/>
            <person name="Gas S."/>
            <person name="Barry C.E. III"/>
            <person name="Tekaia F."/>
            <person name="Badcock K."/>
            <person name="Basham D."/>
            <person name="Brown D."/>
            <person name="Chillingworth T."/>
            <person name="Connor R."/>
            <person name="Davies R.M."/>
            <person name="Devlin K."/>
            <person name="Feltwell T."/>
            <person name="Gentles S."/>
            <person name="Hamlin N."/>
            <person name="Holroyd S."/>
            <person name="Hornsby T."/>
            <person name="Jagels K."/>
            <person name="Krogh A."/>
            <person name="McLean J."/>
            <person name="Moule S."/>
            <person name="Murphy L.D."/>
            <person name="Oliver S."/>
            <person name="Osborne J."/>
            <person name="Quail M.A."/>
            <person name="Rajandream M.A."/>
            <person name="Rogers J."/>
            <person name="Rutter S."/>
            <person name="Seeger K."/>
            <person name="Skelton S."/>
            <person name="Squares S."/>
            <person name="Squares R."/>
            <person name="Sulston J.E."/>
            <person name="Taylor K."/>
            <person name="Whitehead S."/>
            <person name="Barrell B.G."/>
        </authorList>
    </citation>
    <scope>NUCLEOTIDE SEQUENCE [LARGE SCALE GENOMIC DNA]</scope>
    <source>
        <strain>ATCC 25618 / H37Rv</strain>
    </source>
</reference>
<reference key="2">
    <citation type="journal article" date="2011" name="Mol. Cell. Proteomics">
        <title>Proteogenomic analysis of Mycobacterium tuberculosis by high resolution mass spectrometry.</title>
        <authorList>
            <person name="Kelkar D.S."/>
            <person name="Kumar D."/>
            <person name="Kumar P."/>
            <person name="Balakrishnan L."/>
            <person name="Muthusamy B."/>
            <person name="Yadav A.K."/>
            <person name="Shrivastava P."/>
            <person name="Marimuthu A."/>
            <person name="Anand S."/>
            <person name="Sundaram H."/>
            <person name="Kingsbury R."/>
            <person name="Harsha H.C."/>
            <person name="Nair B."/>
            <person name="Prasad T.S."/>
            <person name="Chauhan D.S."/>
            <person name="Katoch K."/>
            <person name="Katoch V.M."/>
            <person name="Kumar P."/>
            <person name="Chaerkady R."/>
            <person name="Ramachandran S."/>
            <person name="Dash D."/>
            <person name="Pandey A."/>
        </authorList>
    </citation>
    <scope>IDENTIFICATION BY MASS SPECTROMETRY [LARGE SCALE ANALYSIS]</scope>
    <source>
        <strain>ATCC 25618 / H37Rv</strain>
    </source>
</reference>
<keyword id="KW-0050">Antiport</keyword>
<keyword id="KW-1003">Cell membrane</keyword>
<keyword id="KW-0406">Ion transport</keyword>
<keyword id="KW-0472">Membrane</keyword>
<keyword id="KW-1185">Reference proteome</keyword>
<keyword id="KW-0915">Sodium</keyword>
<keyword id="KW-0739">Sodium transport</keyword>
<keyword id="KW-0812">Transmembrane</keyword>
<keyword id="KW-1133">Transmembrane helix</keyword>
<keyword id="KW-0813">Transport</keyword>
<comment type="subcellular location">
    <subcellularLocation>
        <location evidence="2">Cell membrane</location>
        <topology evidence="2">Multi-pass membrane protein</topology>
    </subcellularLocation>
</comment>
<comment type="similarity">
    <text evidence="2">Belongs to the monovalent cation:proton antiporter 1 (CPA1) transporter (TC 2.A.36) family.</text>
</comment>
<organism>
    <name type="scientific">Mycobacterium tuberculosis (strain ATCC 25618 / H37Rv)</name>
    <dbReference type="NCBI Taxonomy" id="83332"/>
    <lineage>
        <taxon>Bacteria</taxon>
        <taxon>Bacillati</taxon>
        <taxon>Actinomycetota</taxon>
        <taxon>Actinomycetes</taxon>
        <taxon>Mycobacteriales</taxon>
        <taxon>Mycobacteriaceae</taxon>
        <taxon>Mycobacterium</taxon>
        <taxon>Mycobacterium tuberculosis complex</taxon>
    </lineage>
</organism>
<dbReference type="EMBL" id="AL123456">
    <property type="protein sequence ID" value="CCP45069.1"/>
    <property type="molecule type" value="Genomic_DNA"/>
</dbReference>
<dbReference type="PIR" id="C70732">
    <property type="entry name" value="C70732"/>
</dbReference>
<dbReference type="RefSeq" id="WP_003411714.1">
    <property type="nucleotide sequence ID" value="NC_000962.3"/>
</dbReference>
<dbReference type="SMR" id="P9WJI3"/>
<dbReference type="FunCoup" id="P9WJI3">
    <property type="interactions" value="238"/>
</dbReference>
<dbReference type="STRING" id="83332.Rv2287"/>
<dbReference type="PaxDb" id="83332-Rv2287"/>
<dbReference type="KEGG" id="mtu:Rv2287"/>
<dbReference type="KEGG" id="mtv:RVBD_2287"/>
<dbReference type="PATRIC" id="fig|83332.111.peg.2542"/>
<dbReference type="TubercuList" id="Rv2287"/>
<dbReference type="eggNOG" id="COG0025">
    <property type="taxonomic scope" value="Bacteria"/>
</dbReference>
<dbReference type="InParanoid" id="P9WJI3"/>
<dbReference type="OrthoDB" id="57886at2"/>
<dbReference type="PhylomeDB" id="P9WJI3"/>
<dbReference type="Proteomes" id="UP000001584">
    <property type="component" value="Chromosome"/>
</dbReference>
<dbReference type="GO" id="GO:0005886">
    <property type="term" value="C:plasma membrane"/>
    <property type="evidence" value="ECO:0000318"/>
    <property type="project" value="GO_Central"/>
</dbReference>
<dbReference type="GO" id="GO:0015386">
    <property type="term" value="F:potassium:proton antiporter activity"/>
    <property type="evidence" value="ECO:0000318"/>
    <property type="project" value="GO_Central"/>
</dbReference>
<dbReference type="GO" id="GO:0015385">
    <property type="term" value="F:sodium:proton antiporter activity"/>
    <property type="evidence" value="ECO:0000318"/>
    <property type="project" value="GO_Central"/>
</dbReference>
<dbReference type="GO" id="GO:0071805">
    <property type="term" value="P:potassium ion transmembrane transport"/>
    <property type="evidence" value="ECO:0000318"/>
    <property type="project" value="GO_Central"/>
</dbReference>
<dbReference type="GO" id="GO:0051453">
    <property type="term" value="P:regulation of intracellular pH"/>
    <property type="evidence" value="ECO:0000318"/>
    <property type="project" value="GO_Central"/>
</dbReference>
<dbReference type="GO" id="GO:0098719">
    <property type="term" value="P:sodium ion import across plasma membrane"/>
    <property type="evidence" value="ECO:0000318"/>
    <property type="project" value="GO_Central"/>
</dbReference>
<dbReference type="Gene3D" id="6.10.140.1330">
    <property type="match status" value="1"/>
</dbReference>
<dbReference type="InterPro" id="IPR018422">
    <property type="entry name" value="Cation/H_exchanger_CPA1"/>
</dbReference>
<dbReference type="InterPro" id="IPR004705">
    <property type="entry name" value="Cation/H_exchanger_CPA1_bac"/>
</dbReference>
<dbReference type="InterPro" id="IPR006153">
    <property type="entry name" value="Cation/H_exchanger_TM"/>
</dbReference>
<dbReference type="NCBIfam" id="TIGR00831">
    <property type="entry name" value="a_cpa1"/>
    <property type="match status" value="1"/>
</dbReference>
<dbReference type="PANTHER" id="PTHR10110">
    <property type="entry name" value="SODIUM/HYDROGEN EXCHANGER"/>
    <property type="match status" value="1"/>
</dbReference>
<dbReference type="PANTHER" id="PTHR10110:SF86">
    <property type="entry name" value="SODIUM_HYDROGEN EXCHANGER 7"/>
    <property type="match status" value="1"/>
</dbReference>
<dbReference type="Pfam" id="PF00999">
    <property type="entry name" value="Na_H_Exchanger"/>
    <property type="match status" value="1"/>
</dbReference>
<sequence>MNGRRTIGEDGLVFGLVVIVALVAAVVVGTVLGHRYRVGPPVLLILSGSLLGLIPRFGDVQIDGEVVLLLFLPAILYWESMNTSFREIRWNLRVIVMFSIGLVIATAVAVSWTARALGMESHAAAVLGAVLSPTDAAAVAGLAKRLPRRALTVLRGESLINDGTALVLFAVTVAVAEGAAGIGPAALVGRFVVSYLGGIMAGLLVGGLVTLLRRRIDAPLEEGALSLLTPFAAFLLAQSLKCSGVVAVLVSALVLTYVGPTVIRARSRLQAHAFWDIATFLINGSLWVFVGVQIPGAIDHIAGEDGGLPRATVLALAVTGVVIATRIAWVQATTVLGHTVDRVLKKPTRHVGFRQRCVTSWAGFRGAVSLAAALAVPMTTNSGAPFPDRNLIIFVVSVVILVTVLVQGTSLPTVVRWARMPEDVAHANELQLARTRSAQAALDALPTVADELGVAPDLVKHLEKEYEERAVLVMADGADSATSDLAERNDLVRRVRLGVLQHQRQAVTTLRNQNLIDDIVLRELQAAMDLEEVQLLDPADAE</sequence>
<feature type="chain" id="PRO_0000052400" description="Uncharacterized Na(+)/H(+) exchanger Rv2287">
    <location>
        <begin position="1"/>
        <end position="542"/>
    </location>
</feature>
<feature type="transmembrane region" description="Helical" evidence="1">
    <location>
        <begin position="12"/>
        <end position="32"/>
    </location>
</feature>
<feature type="transmembrane region" description="Helical" evidence="1">
    <location>
        <begin position="57"/>
        <end position="77"/>
    </location>
</feature>
<feature type="transmembrane region" description="Helical" evidence="1">
    <location>
        <begin position="94"/>
        <end position="114"/>
    </location>
</feature>
<feature type="transmembrane region" description="Helical" evidence="1">
    <location>
        <begin position="123"/>
        <end position="143"/>
    </location>
</feature>
<feature type="transmembrane region" description="Helical" evidence="1">
    <location>
        <begin position="168"/>
        <end position="188"/>
    </location>
</feature>
<feature type="transmembrane region" description="Helical" evidence="1">
    <location>
        <begin position="191"/>
        <end position="211"/>
    </location>
</feature>
<feature type="transmembrane region" description="Helical" evidence="1">
    <location>
        <begin position="216"/>
        <end position="236"/>
    </location>
</feature>
<feature type="transmembrane region" description="Helical" evidence="1">
    <location>
        <begin position="243"/>
        <end position="263"/>
    </location>
</feature>
<feature type="transmembrane region" description="Helical" evidence="1">
    <location>
        <begin position="277"/>
        <end position="297"/>
    </location>
</feature>
<feature type="transmembrane region" description="Helical" evidence="1">
    <location>
        <begin position="313"/>
        <end position="333"/>
    </location>
</feature>
<feature type="transmembrane region" description="Helical" evidence="1">
    <location>
        <begin position="358"/>
        <end position="378"/>
    </location>
</feature>
<feature type="transmembrane region" description="Helical" evidence="1">
    <location>
        <begin position="391"/>
        <end position="411"/>
    </location>
</feature>
<accession>P9WJI3</accession>
<accession>L0T963</accession>
<accession>P65526</accession>
<accession>Q50678</accession>
<protein>
    <recommendedName>
        <fullName>Uncharacterized Na(+)/H(+) exchanger Rv2287</fullName>
    </recommendedName>
</protein>